<organism>
    <name type="scientific">Cryptodendrum adhaesivum</name>
    <name type="common">Adhesive sea anemone</name>
    <dbReference type="NCBI Taxonomy" id="659513"/>
    <lineage>
        <taxon>Eukaryota</taxon>
        <taxon>Metazoa</taxon>
        <taxon>Cnidaria</taxon>
        <taxon>Anthozoa</taxon>
        <taxon>Hexacorallia</taxon>
        <taxon>Actiniaria</taxon>
        <taxon>Nynantheae</taxon>
        <taxon>Thalassianthidae</taxon>
        <taxon>Cryptodendrum</taxon>
    </lineage>
</organism>
<comment type="function">
    <text evidence="2">Inhibits voltage-gated potassium channels (Kv) with higher potency for Kv1.1/KCNA1 and Kv1.3/KCNA3.</text>
</comment>
<comment type="subcellular location">
    <subcellularLocation>
        <location evidence="6">Secreted</location>
    </subcellularLocation>
    <subcellularLocation>
        <location evidence="6">Nematocyst</location>
    </subcellularLocation>
</comment>
<comment type="miscellaneous">
    <text evidence="6">In PubMed:21339955, this protein is called kappa-TLTX-Hh1a. The TATX abbreviation is given to this protein since the abbreviation TLTX was already given to a spider family.</text>
</comment>
<comment type="similarity">
    <text evidence="6">Belongs to the sea anemone type 1 potassium channel toxin family. Type 1a subfamily.</text>
</comment>
<keyword id="KW-0165">Cleavage on pair of basic residues</keyword>
<keyword id="KW-1015">Disulfide bond</keyword>
<keyword id="KW-0872">Ion channel impairing toxin</keyword>
<keyword id="KW-0166">Nematocyst</keyword>
<keyword id="KW-0528">Neurotoxin</keyword>
<keyword id="KW-0632">Potassium channel impairing toxin</keyword>
<keyword id="KW-0964">Secreted</keyword>
<keyword id="KW-0732">Signal</keyword>
<keyword id="KW-0800">Toxin</keyword>
<keyword id="KW-1220">Voltage-gated potassium channel impairing toxin</keyword>
<reference key="1">
    <citation type="journal article" date="2010" name="Mar. Drugs">
        <title>Screening and cDNA cloning of Kv1 potassium channel toxins in sea anemones.</title>
        <authorList>
            <person name="Yamaguchi Y."/>
            <person name="Hasegawa Y."/>
            <person name="Honma T."/>
            <person name="Nagashima Y."/>
            <person name="Shiomi K."/>
        </authorList>
    </citation>
    <scope>NUCLEOTIDE SEQUENCE [MRNA]</scope>
</reference>
<feature type="signal peptide" evidence="3">
    <location>
        <begin position="1"/>
        <end position="22"/>
    </location>
</feature>
<feature type="propeptide" id="PRO_0000425835" evidence="1">
    <location>
        <begin position="23"/>
        <end position="40"/>
    </location>
</feature>
<feature type="peptide" id="PRO_0000425836" description="Kappa-thalatoxin-Cad2a" evidence="2">
    <location>
        <begin position="41"/>
        <end position="75"/>
    </location>
</feature>
<feature type="domain" description="ShKT" evidence="4">
    <location>
        <begin position="43"/>
        <end position="75"/>
    </location>
</feature>
<feature type="site" description="Important residue for binding Kv1.3/KCNA3" evidence="2">
    <location>
        <position position="47"/>
    </location>
</feature>
<feature type="site" description="Important residue for binding Kv1.3/KCNA3" evidence="2">
    <location>
        <position position="49"/>
    </location>
</feature>
<feature type="site" description="Important residue for binding Kv1.3/KCNA3" evidence="2">
    <location>
        <position position="51"/>
    </location>
</feature>
<feature type="site" description="Important residue for binding Kv1.3/KCNA3" evidence="2">
    <location>
        <position position="60"/>
    </location>
</feature>
<feature type="site" description="Important residue for binding Kv1.3/KCNA3" evidence="2">
    <location>
        <position position="61"/>
    </location>
</feature>
<feature type="site" description="Key residue for binding both Kv1.2/KCNA2 and Kv1.3/KCNA3 (occludes the channel pore like a cork in a bottle)" evidence="2">
    <location>
        <position position="62"/>
    </location>
</feature>
<feature type="site" description="Important residue for binding Kv1.3/KCNA3" evidence="2">
    <location>
        <position position="63"/>
    </location>
</feature>
<feature type="site" description="Important residue for binding Kv1.3/KCNA3" evidence="2">
    <location>
        <position position="67"/>
    </location>
</feature>
<feature type="disulfide bond" evidence="2">
    <location>
        <begin position="43"/>
        <end position="75"/>
    </location>
</feature>
<feature type="disulfide bond" evidence="2">
    <location>
        <begin position="52"/>
        <end position="68"/>
    </location>
</feature>
<feature type="disulfide bond" evidence="2">
    <location>
        <begin position="57"/>
        <end position="72"/>
    </location>
</feature>
<accession>E2S064</accession>
<evidence type="ECO:0000250" key="1"/>
<evidence type="ECO:0000250" key="2">
    <source>
        <dbReference type="UniProtKB" id="P29187"/>
    </source>
</evidence>
<evidence type="ECO:0000255" key="3"/>
<evidence type="ECO:0000255" key="4">
    <source>
        <dbReference type="PROSITE-ProRule" id="PRU01005"/>
    </source>
</evidence>
<evidence type="ECO:0000303" key="5">
    <source>
    </source>
</evidence>
<evidence type="ECO:0000305" key="6"/>
<evidence type="ECO:0000305" key="7">
    <source>
    </source>
</evidence>
<evidence type="ECO:0000312" key="8">
    <source>
        <dbReference type="EMBL" id="BAJ23161.1"/>
    </source>
</evidence>
<sequence>MKFQMIAAVLLIAFCLCVVVTARMELQDVEDMKNGSFQKRRTCIDTIPKSRCTAFQCKNSMKYRLSFCRKTCGTC</sequence>
<name>K1A_CRYAD</name>
<proteinExistence type="inferred from homology"/>
<protein>
    <recommendedName>
        <fullName evidence="6">Kappa-thalatoxin-Cad2a</fullName>
        <shortName evidence="6">Kappa-TATX-Cad2a</shortName>
    </recommendedName>
    <alternativeName>
        <fullName evidence="5">Kappa1.3-thalatoxin-Ca1a</fullName>
        <shortName evidence="7">Kappa-TATX-Ca1a</shortName>
        <shortName evidence="5">Kappa1.3-TLTX-Ca1a</shortName>
    </alternativeName>
    <alternativeName>
        <fullName evidence="8">Potassium channel peptide toxin ca-k</fullName>
        <shortName evidence="6">CaK</shortName>
    </alternativeName>
</protein>
<dbReference type="EMBL" id="AB595207">
    <property type="protein sequence ID" value="BAJ23161.1"/>
    <property type="molecule type" value="mRNA"/>
</dbReference>
<dbReference type="SMR" id="E2S064"/>
<dbReference type="GO" id="GO:0005576">
    <property type="term" value="C:extracellular region"/>
    <property type="evidence" value="ECO:0007669"/>
    <property type="project" value="UniProtKB-SubCell"/>
</dbReference>
<dbReference type="GO" id="GO:0042151">
    <property type="term" value="C:nematocyst"/>
    <property type="evidence" value="ECO:0007669"/>
    <property type="project" value="UniProtKB-SubCell"/>
</dbReference>
<dbReference type="GO" id="GO:0015459">
    <property type="term" value="F:potassium channel regulator activity"/>
    <property type="evidence" value="ECO:0007669"/>
    <property type="project" value="UniProtKB-KW"/>
</dbReference>
<dbReference type="GO" id="GO:0090729">
    <property type="term" value="F:toxin activity"/>
    <property type="evidence" value="ECO:0007669"/>
    <property type="project" value="UniProtKB-KW"/>
</dbReference>
<dbReference type="InterPro" id="IPR003582">
    <property type="entry name" value="ShKT_dom"/>
</dbReference>
<dbReference type="SUPFAM" id="SSF57546">
    <property type="entry name" value="Crisp domain-like"/>
    <property type="match status" value="1"/>
</dbReference>
<dbReference type="PROSITE" id="PS51670">
    <property type="entry name" value="SHKT"/>
    <property type="match status" value="1"/>
</dbReference>